<sequence>MQRRIMGIETEFGITCTFHGQRRLSPDEVARYLFRRVVSWGRSSNVFLRNGSRLYLDVGSHPEYATAECDELPVLIAHDKAGERILQDLVVDAETRLAEEGIGGDIYLFKNNTDSAGNSYGCHENFLIARGGEFAKIADGLIPFLVTRQLIAGAGKVLQSPRGASYCLSQRADHIWEGVSSATTRSRPIINTRDEPHADAERYRRLHVIVGDSNMSETTTLLKVGTAALVLEMIESGVPMRDFTFENPIRAIREISHDTTGRKAVRLAGGGDISALDAQTEYYEKAAAFVANRGTDPVTHQVLDLWRRTLEAVQTQDFTKVDTEIDWIIKKKLIDAYAAKHGLDLTHPRIAQLDLTYHDVRPGRGLHSLLAARGRAARVVTDGQITTAMTVPPQTTRARLRGEFVAAAQDAGRDYTVDWVHLKLNDQAQRTVLLKDPFRSTDDRVTKLIEAM</sequence>
<feature type="chain" id="PRO_0000395940" description="Pup--protein ligase">
    <location>
        <begin position="1"/>
        <end position="452"/>
    </location>
</feature>
<feature type="active site" description="Proton acceptor" evidence="1">
    <location>
        <position position="57"/>
    </location>
</feature>
<feature type="binding site" evidence="1">
    <location>
        <position position="9"/>
    </location>
    <ligand>
        <name>Mg(2+)</name>
        <dbReference type="ChEBI" id="CHEBI:18420"/>
    </ligand>
</feature>
<feature type="binding site" evidence="1">
    <location>
        <position position="53"/>
    </location>
    <ligand>
        <name>ATP</name>
        <dbReference type="ChEBI" id="CHEBI:30616"/>
    </ligand>
</feature>
<feature type="binding site" evidence="1">
    <location>
        <position position="55"/>
    </location>
    <ligand>
        <name>Mg(2+)</name>
        <dbReference type="ChEBI" id="CHEBI:18420"/>
    </ligand>
</feature>
<feature type="binding site" evidence="1">
    <location>
        <position position="63"/>
    </location>
    <ligand>
        <name>Mg(2+)</name>
        <dbReference type="ChEBI" id="CHEBI:18420"/>
    </ligand>
</feature>
<feature type="binding site" evidence="1">
    <location>
        <position position="66"/>
    </location>
    <ligand>
        <name>ATP</name>
        <dbReference type="ChEBI" id="CHEBI:30616"/>
    </ligand>
</feature>
<feature type="binding site" evidence="1">
    <location>
        <position position="419"/>
    </location>
    <ligand>
        <name>ATP</name>
        <dbReference type="ChEBI" id="CHEBI:30616"/>
    </ligand>
</feature>
<accession>C8XAP5</accession>
<evidence type="ECO:0000255" key="1">
    <source>
        <dbReference type="HAMAP-Rule" id="MF_02111"/>
    </source>
</evidence>
<protein>
    <recommendedName>
        <fullName evidence="1">Pup--protein ligase</fullName>
        <ecNumber evidence="1">6.3.1.19</ecNumber>
    </recommendedName>
    <alternativeName>
        <fullName evidence="1">Proteasome accessory factor A</fullName>
    </alternativeName>
    <alternativeName>
        <fullName evidence="1">Pup-conjugating enzyme</fullName>
    </alternativeName>
</protein>
<organism>
    <name type="scientific">Nakamurella multipartita (strain ATCC 700099 / DSM 44233 / CIP 104796 / JCM 9543 / NBRC 105858 / Y-104)</name>
    <name type="common">Microsphaera multipartita</name>
    <dbReference type="NCBI Taxonomy" id="479431"/>
    <lineage>
        <taxon>Bacteria</taxon>
        <taxon>Bacillati</taxon>
        <taxon>Actinomycetota</taxon>
        <taxon>Actinomycetes</taxon>
        <taxon>Nakamurellales</taxon>
        <taxon>Nakamurellaceae</taxon>
        <taxon>Nakamurella</taxon>
    </lineage>
</organism>
<reference key="1">
    <citation type="submission" date="2009-09" db="EMBL/GenBank/DDBJ databases">
        <title>The complete genome of Nakamurella multipartita DSM 44233.</title>
        <authorList>
            <consortium name="US DOE Joint Genome Institute (JGI-PGF)"/>
            <person name="Lucas S."/>
            <person name="Copeland A."/>
            <person name="Lapidus A."/>
            <person name="Glavina del Rio T."/>
            <person name="Dalin E."/>
            <person name="Tice H."/>
            <person name="Bruce D."/>
            <person name="Goodwin L."/>
            <person name="Pitluck S."/>
            <person name="Kyrpides N."/>
            <person name="Mavromatis K."/>
            <person name="Ivanova N."/>
            <person name="Ovchinnikova G."/>
            <person name="Sims D."/>
            <person name="Meincke L."/>
            <person name="Brettin T."/>
            <person name="Detter J.C."/>
            <person name="Han C."/>
            <person name="Larimer F."/>
            <person name="Land M."/>
            <person name="Hauser L."/>
            <person name="Markowitz V."/>
            <person name="Cheng J.-F."/>
            <person name="Hugenholtz P."/>
            <person name="Woyke T."/>
            <person name="Wu D."/>
            <person name="Klenk H.-P."/>
            <person name="Eisen J.A."/>
        </authorList>
    </citation>
    <scope>NUCLEOTIDE SEQUENCE [LARGE SCALE GENOMIC DNA]</scope>
    <source>
        <strain>ATCC 700099 / DSM 44233 / CIP 104796 / JCM 9543 / NBRC 105858 / Y-104</strain>
    </source>
</reference>
<dbReference type="EC" id="6.3.1.19" evidence="1"/>
<dbReference type="EMBL" id="CP001737">
    <property type="protein sequence ID" value="ACV79298.1"/>
    <property type="molecule type" value="Genomic_DNA"/>
</dbReference>
<dbReference type="RefSeq" id="WP_015748172.1">
    <property type="nucleotide sequence ID" value="NC_013235.1"/>
</dbReference>
<dbReference type="SMR" id="C8XAP5"/>
<dbReference type="STRING" id="479431.Namu_2960"/>
<dbReference type="KEGG" id="nml:Namu_2960"/>
<dbReference type="eggNOG" id="COG0638">
    <property type="taxonomic scope" value="Bacteria"/>
</dbReference>
<dbReference type="HOGENOM" id="CLU_040524_0_1_11"/>
<dbReference type="InParanoid" id="C8XAP5"/>
<dbReference type="OrthoDB" id="9760627at2"/>
<dbReference type="UniPathway" id="UPA00997"/>
<dbReference type="UniPathway" id="UPA00998"/>
<dbReference type="Proteomes" id="UP000002218">
    <property type="component" value="Chromosome"/>
</dbReference>
<dbReference type="GO" id="GO:0005524">
    <property type="term" value="F:ATP binding"/>
    <property type="evidence" value="ECO:0007669"/>
    <property type="project" value="UniProtKB-UniRule"/>
</dbReference>
<dbReference type="GO" id="GO:0016879">
    <property type="term" value="F:ligase activity, forming carbon-nitrogen bonds"/>
    <property type="evidence" value="ECO:0007669"/>
    <property type="project" value="InterPro"/>
</dbReference>
<dbReference type="GO" id="GO:0000287">
    <property type="term" value="F:magnesium ion binding"/>
    <property type="evidence" value="ECO:0007669"/>
    <property type="project" value="UniProtKB-UniRule"/>
</dbReference>
<dbReference type="GO" id="GO:0019787">
    <property type="term" value="F:ubiquitin-like protein transferase activity"/>
    <property type="evidence" value="ECO:0007669"/>
    <property type="project" value="UniProtKB-UniRule"/>
</dbReference>
<dbReference type="GO" id="GO:0019941">
    <property type="term" value="P:modification-dependent protein catabolic process"/>
    <property type="evidence" value="ECO:0007669"/>
    <property type="project" value="UniProtKB-UniRule"/>
</dbReference>
<dbReference type="GO" id="GO:0010498">
    <property type="term" value="P:proteasomal protein catabolic process"/>
    <property type="evidence" value="ECO:0007669"/>
    <property type="project" value="UniProtKB-UniRule"/>
</dbReference>
<dbReference type="GO" id="GO:0070490">
    <property type="term" value="P:protein pupylation"/>
    <property type="evidence" value="ECO:0007669"/>
    <property type="project" value="UniProtKB-UniRule"/>
</dbReference>
<dbReference type="HAMAP" id="MF_02111">
    <property type="entry name" value="Pup_ligase"/>
    <property type="match status" value="1"/>
</dbReference>
<dbReference type="InterPro" id="IPR022279">
    <property type="entry name" value="Pup_ligase"/>
</dbReference>
<dbReference type="InterPro" id="IPR004347">
    <property type="entry name" value="Pup_ligase/deamidase"/>
</dbReference>
<dbReference type="NCBIfam" id="TIGR03686">
    <property type="entry name" value="pupylate_PafA"/>
    <property type="match status" value="1"/>
</dbReference>
<dbReference type="PANTHER" id="PTHR42307">
    <property type="entry name" value="PUP DEAMIDASE/DEPUPYLASE"/>
    <property type="match status" value="1"/>
</dbReference>
<dbReference type="PANTHER" id="PTHR42307:SF3">
    <property type="entry name" value="PUP--PROTEIN LIGASE"/>
    <property type="match status" value="1"/>
</dbReference>
<dbReference type="Pfam" id="PF03136">
    <property type="entry name" value="Pup_ligase"/>
    <property type="match status" value="1"/>
</dbReference>
<dbReference type="PIRSF" id="PIRSF018077">
    <property type="entry name" value="UCP018077"/>
    <property type="match status" value="1"/>
</dbReference>
<keyword id="KW-0067">ATP-binding</keyword>
<keyword id="KW-0436">Ligase</keyword>
<keyword id="KW-0460">Magnesium</keyword>
<keyword id="KW-0479">Metal-binding</keyword>
<keyword id="KW-0547">Nucleotide-binding</keyword>
<keyword id="KW-1185">Reference proteome</keyword>
<keyword id="KW-0833">Ubl conjugation pathway</keyword>
<comment type="function">
    <text evidence="1">Catalyzes the covalent attachment of the prokaryotic ubiquitin-like protein modifier Pup to the proteasomal substrate proteins, thereby targeting them for proteasomal degradation. This tagging system is termed pupylation. The ligation reaction involves the side-chain carboxylate of the C-terminal glutamate of Pup and the side-chain amino group of a substrate lysine.</text>
</comment>
<comment type="catalytic activity">
    <reaction evidence="1">
        <text>ATP + [prokaryotic ubiquitin-like protein]-L-glutamate + [protein]-L-lysine = ADP + phosphate + N(6)-([prokaryotic ubiquitin-like protein]-gamma-L-glutamyl)-[protein]-L-lysine.</text>
        <dbReference type="EC" id="6.3.1.19"/>
    </reaction>
</comment>
<comment type="pathway">
    <text evidence="1">Protein degradation; proteasomal Pup-dependent pathway.</text>
</comment>
<comment type="pathway">
    <text evidence="1">Protein modification; protein pupylation.</text>
</comment>
<comment type="miscellaneous">
    <text evidence="1">The reaction mechanism probably proceeds via the activation of Pup by phosphorylation of its C-terminal glutamate, which is then subject to nucleophilic attack by the substrate lysine, resulting in an isopeptide bond and the release of phosphate as a good leaving group.</text>
</comment>
<comment type="similarity">
    <text evidence="1">Belongs to the Pup ligase/Pup deamidase family. Pup-conjugating enzyme subfamily.</text>
</comment>
<name>PAFA_NAKMY</name>
<proteinExistence type="inferred from homology"/>
<gene>
    <name evidence="1" type="primary">pafA</name>
    <name type="ordered locus">Namu_2960</name>
</gene>